<protein>
    <recommendedName>
        <fullName evidence="1">S-adenosylmethionine decarboxylase proenzyme</fullName>
        <shortName evidence="1">AdoMetDC</shortName>
        <shortName evidence="1">SAMDC</shortName>
        <ecNumber evidence="1">4.1.1.50</ecNumber>
    </recommendedName>
    <component>
        <recommendedName>
            <fullName evidence="1">S-adenosylmethionine decarboxylase beta chain</fullName>
        </recommendedName>
    </component>
    <component>
        <recommendedName>
            <fullName evidence="1">S-adenosylmethionine decarboxylase alpha chain</fullName>
        </recommendedName>
    </component>
</protein>
<gene>
    <name evidence="1" type="primary">speH</name>
    <name type="ordered locus">OB0938</name>
</gene>
<comment type="function">
    <text evidence="1">Catalyzes the decarboxylation of S-adenosylmethionine to S-adenosylmethioninamine (dcAdoMet), the propylamine donor required for the synthesis of the polyamines spermine and spermidine from the diamine putrescine.</text>
</comment>
<comment type="catalytic activity">
    <reaction evidence="1">
        <text>S-adenosyl-L-methionine + H(+) = S-adenosyl 3-(methylsulfanyl)propylamine + CO2</text>
        <dbReference type="Rhea" id="RHEA:15981"/>
        <dbReference type="ChEBI" id="CHEBI:15378"/>
        <dbReference type="ChEBI" id="CHEBI:16526"/>
        <dbReference type="ChEBI" id="CHEBI:57443"/>
        <dbReference type="ChEBI" id="CHEBI:59789"/>
        <dbReference type="EC" id="4.1.1.50"/>
    </reaction>
</comment>
<comment type="cofactor">
    <cofactor evidence="1">
        <name>pyruvate</name>
        <dbReference type="ChEBI" id="CHEBI:15361"/>
    </cofactor>
    <text evidence="1">Binds 1 pyruvoyl group covalently per subunit.</text>
</comment>
<comment type="pathway">
    <text evidence="1">Amine and polyamine biosynthesis; S-adenosylmethioninamine biosynthesis; S-adenosylmethioninamine from S-adenosyl-L-methionine: step 1/1.</text>
</comment>
<comment type="subunit">
    <text evidence="1">Heterotetramer of two alpha and two beta chains arranged as a dimer of alpha/beta heterodimers.</text>
</comment>
<comment type="PTM">
    <text evidence="1">Is synthesized initially as an inactive proenzyme. Formation of the active enzyme involves a self-maturation process in which the active site pyruvoyl group is generated from an internal serine residue via an autocatalytic post-translational modification. Two non-identical subunits are generated from the proenzyme in this reaction, and the pyruvate is formed at the N-terminus of the alpha chain, which is derived from the carboxyl end of the proenzyme. The post-translation cleavage follows an unusual pathway, termed non-hydrolytic serinolysis, in which the side chain hydroxyl group of the serine supplies its oxygen atom to form the C-terminus of the beta chain, while the remainder of the serine residue undergoes an oxidative deamination to produce ammonia and the pyruvoyl group blocking the N-terminus of the alpha chain.</text>
</comment>
<comment type="similarity">
    <text evidence="1">Belongs to the prokaryotic AdoMetDC family. Type 1 subfamily.</text>
</comment>
<evidence type="ECO:0000255" key="1">
    <source>
        <dbReference type="HAMAP-Rule" id="MF_00464"/>
    </source>
</evidence>
<sequence>MDVLGRHIIAELWECNLEKLNNIDFIRDTFVEAAVLAGAEVREVVFHPFAPYGISGVVIISESHLTIHSFPEHGYASIDVYTCGDKVDPNIAVKHIADALESSVGQFREIPRGMGPVNAKPIQKIK</sequence>
<name>SPEH_OCEIH</name>
<feature type="chain" id="PRO_0000030113" description="S-adenosylmethionine decarboxylase beta chain" evidence="1">
    <location>
        <begin position="1"/>
        <end position="62"/>
    </location>
</feature>
<feature type="chain" id="PRO_0000030114" description="S-adenosylmethionine decarboxylase alpha chain" evidence="1">
    <location>
        <begin position="63"/>
        <end position="126"/>
    </location>
</feature>
<feature type="active site" description="Schiff-base intermediate with substrate; via pyruvic acid" evidence="1">
    <location>
        <position position="63"/>
    </location>
</feature>
<feature type="active site" description="Proton acceptor; for processing activity" evidence="1">
    <location>
        <position position="68"/>
    </location>
</feature>
<feature type="active site" description="Proton donor; for catalytic activity" evidence="1">
    <location>
        <position position="83"/>
    </location>
</feature>
<feature type="site" description="Cleavage (non-hydrolytic); by autolysis" evidence="1">
    <location>
        <begin position="62"/>
        <end position="63"/>
    </location>
</feature>
<feature type="modified residue" description="Pyruvic acid (Ser); by autocatalysis" evidence="1">
    <location>
        <position position="63"/>
    </location>
</feature>
<proteinExistence type="inferred from homology"/>
<organism>
    <name type="scientific">Oceanobacillus iheyensis (strain DSM 14371 / CIP 107618 / JCM 11309 / KCTC 3954 / HTE831)</name>
    <dbReference type="NCBI Taxonomy" id="221109"/>
    <lineage>
        <taxon>Bacteria</taxon>
        <taxon>Bacillati</taxon>
        <taxon>Bacillota</taxon>
        <taxon>Bacilli</taxon>
        <taxon>Bacillales</taxon>
        <taxon>Bacillaceae</taxon>
        <taxon>Oceanobacillus</taxon>
    </lineage>
</organism>
<dbReference type="EC" id="4.1.1.50" evidence="1"/>
<dbReference type="EMBL" id="BA000028">
    <property type="protein sequence ID" value="BAC12894.1"/>
    <property type="molecule type" value="Genomic_DNA"/>
</dbReference>
<dbReference type="RefSeq" id="WP_011065340.1">
    <property type="nucleotide sequence ID" value="NC_004193.1"/>
</dbReference>
<dbReference type="SMR" id="Q8CV19"/>
<dbReference type="STRING" id="221109.gene:10733176"/>
<dbReference type="KEGG" id="oih:OB0938"/>
<dbReference type="eggNOG" id="COG1586">
    <property type="taxonomic scope" value="Bacteria"/>
</dbReference>
<dbReference type="HOGENOM" id="CLU_125470_2_3_9"/>
<dbReference type="OrthoDB" id="9793120at2"/>
<dbReference type="PhylomeDB" id="Q8CV19"/>
<dbReference type="UniPathway" id="UPA00331">
    <property type="reaction ID" value="UER00451"/>
</dbReference>
<dbReference type="Proteomes" id="UP000000822">
    <property type="component" value="Chromosome"/>
</dbReference>
<dbReference type="GO" id="GO:0005829">
    <property type="term" value="C:cytosol"/>
    <property type="evidence" value="ECO:0007669"/>
    <property type="project" value="TreeGrafter"/>
</dbReference>
<dbReference type="GO" id="GO:0004014">
    <property type="term" value="F:adenosylmethionine decarboxylase activity"/>
    <property type="evidence" value="ECO:0007669"/>
    <property type="project" value="UniProtKB-UniRule"/>
</dbReference>
<dbReference type="GO" id="GO:0008295">
    <property type="term" value="P:spermidine biosynthetic process"/>
    <property type="evidence" value="ECO:0007669"/>
    <property type="project" value="UniProtKB-UniRule"/>
</dbReference>
<dbReference type="FunFam" id="3.30.360.110:FF:000001">
    <property type="entry name" value="S-adenosylmethionine decarboxylase proenzyme"/>
    <property type="match status" value="1"/>
</dbReference>
<dbReference type="Gene3D" id="3.30.160.750">
    <property type="match status" value="1"/>
</dbReference>
<dbReference type="Gene3D" id="3.30.360.110">
    <property type="entry name" value="S-adenosylmethionine decarboxylase domain"/>
    <property type="match status" value="1"/>
</dbReference>
<dbReference type="HAMAP" id="MF_00464">
    <property type="entry name" value="AdoMetDC_1"/>
    <property type="match status" value="1"/>
</dbReference>
<dbReference type="InterPro" id="IPR042286">
    <property type="entry name" value="AdoMetDC_C"/>
</dbReference>
<dbReference type="InterPro" id="IPR003826">
    <property type="entry name" value="AdoMetDC_fam_prok"/>
</dbReference>
<dbReference type="InterPro" id="IPR042284">
    <property type="entry name" value="AdoMetDC_N"/>
</dbReference>
<dbReference type="InterPro" id="IPR016067">
    <property type="entry name" value="S-AdoMet_deCO2ase_core"/>
</dbReference>
<dbReference type="InterPro" id="IPR017716">
    <property type="entry name" value="S-AdoMet_deCOase_pro-enz"/>
</dbReference>
<dbReference type="NCBIfam" id="TIGR03330">
    <property type="entry name" value="SAM_DCase_Bsu"/>
    <property type="match status" value="1"/>
</dbReference>
<dbReference type="PANTHER" id="PTHR33866">
    <property type="entry name" value="S-ADENOSYLMETHIONINE DECARBOXYLASE PROENZYME"/>
    <property type="match status" value="1"/>
</dbReference>
<dbReference type="PANTHER" id="PTHR33866:SF2">
    <property type="entry name" value="S-ADENOSYLMETHIONINE DECARBOXYLASE PROENZYME"/>
    <property type="match status" value="1"/>
</dbReference>
<dbReference type="Pfam" id="PF02675">
    <property type="entry name" value="AdoMet_dc"/>
    <property type="match status" value="1"/>
</dbReference>
<dbReference type="SUPFAM" id="SSF56276">
    <property type="entry name" value="S-adenosylmethionine decarboxylase"/>
    <property type="match status" value="1"/>
</dbReference>
<keyword id="KW-0068">Autocatalytic cleavage</keyword>
<keyword id="KW-0210">Decarboxylase</keyword>
<keyword id="KW-0456">Lyase</keyword>
<keyword id="KW-0620">Polyamine biosynthesis</keyword>
<keyword id="KW-0670">Pyruvate</keyword>
<keyword id="KW-1185">Reference proteome</keyword>
<keyword id="KW-0949">S-adenosyl-L-methionine</keyword>
<keyword id="KW-0704">Schiff base</keyword>
<keyword id="KW-0745">Spermidine biosynthesis</keyword>
<keyword id="KW-0865">Zymogen</keyword>
<reference key="1">
    <citation type="journal article" date="2002" name="Nucleic Acids Res.">
        <title>Genome sequence of Oceanobacillus iheyensis isolated from the Iheya Ridge and its unexpected adaptive capabilities to extreme environments.</title>
        <authorList>
            <person name="Takami H."/>
            <person name="Takaki Y."/>
            <person name="Uchiyama I."/>
        </authorList>
    </citation>
    <scope>NUCLEOTIDE SEQUENCE [LARGE SCALE GENOMIC DNA]</scope>
    <source>
        <strain>DSM 14371 / CIP 107618 / JCM 11309 / KCTC 3954 / HTE831</strain>
    </source>
</reference>
<accession>Q8CV19</accession>